<feature type="chain" id="PRO_0000401972" description="Methylthioribose-1-phosphate isomerase">
    <location>
        <begin position="1"/>
        <end position="360"/>
    </location>
</feature>
<feature type="active site" description="Proton donor" evidence="1">
    <location>
        <position position="246"/>
    </location>
</feature>
<feature type="site" description="Transition state stabilizer" evidence="1">
    <location>
        <position position="166"/>
    </location>
</feature>
<gene>
    <name type="ORF">AAEL013828</name>
</gene>
<comment type="function">
    <text evidence="1">Catalyzes the interconversion of methylthioribose-1-phosphate (MTR-1-P) into methylthioribulose-1-phosphate (MTRu-1-P).</text>
</comment>
<comment type="catalytic activity">
    <reaction evidence="1">
        <text>5-(methylsulfanyl)-alpha-D-ribose 1-phosphate = 5-(methylsulfanyl)-D-ribulose 1-phosphate</text>
        <dbReference type="Rhea" id="RHEA:19989"/>
        <dbReference type="ChEBI" id="CHEBI:58533"/>
        <dbReference type="ChEBI" id="CHEBI:58548"/>
        <dbReference type="EC" id="5.3.1.23"/>
    </reaction>
</comment>
<comment type="pathway">
    <text evidence="1">Amino-acid biosynthesis; L-methionine biosynthesis via salvage pathway; L-methionine from S-methyl-5-thio-alpha-D-ribose 1-phosphate: step 1/6.</text>
</comment>
<comment type="subcellular location">
    <subcellularLocation>
        <location evidence="1">Cytoplasm</location>
    </subcellularLocation>
    <subcellularLocation>
        <location evidence="1">Nucleus</location>
    </subcellularLocation>
</comment>
<comment type="similarity">
    <text evidence="1">Belongs to the eIF-2B alpha/beta/delta subunits family. MtnA subfamily.</text>
</comment>
<sequence>MSLKAIKYSNGKLEILDQLLLPAQSKYIDVKGVEDGWKAINKMQVRGAPAIAIVGCLSLAVEIFGEKFDTKQTFKQEVEGKLNYLVSARPTAVNMKLAAEDLISLANALAQDESISVDTMKERFLKAIEDMLDKDIADNMAIGKNGADIILSHIPNGGSVRILTHCNTGSLATAGYGTALGVIRKLHEMNRLEHVYCTETRPYNQGARLTAYELVHDKLPATLILDNMVASLFKSRRVAAVVVGADRVAANGDTANKIGTYQIGVVAKYHDVPFYVAAPFTSIDLKIPSGDRIVIEERPDREMTHVGEHRIAAPGIACWNPAFDVTTADLITGIITEKGVFKPAELKEKVEQIISTNQKL</sequence>
<protein>
    <recommendedName>
        <fullName evidence="1">Methylthioribose-1-phosphate isomerase</fullName>
        <shortName evidence="1">M1Pi</shortName>
        <shortName evidence="1">MTR-1-P isomerase</shortName>
        <ecNumber evidence="1">5.3.1.23</ecNumber>
    </recommendedName>
    <alternativeName>
        <fullName evidence="1">S-methyl-5-thioribose-1-phosphate isomerase</fullName>
    </alternativeName>
    <alternativeName>
        <fullName evidence="1">Translation initiation factor eIF-2B subunit alpha/beta/delta-like protein</fullName>
    </alternativeName>
</protein>
<accession>Q16I17</accession>
<dbReference type="EC" id="5.3.1.23" evidence="1"/>
<dbReference type="EMBL" id="CH478117">
    <property type="protein sequence ID" value="EAT33907.1"/>
    <property type="molecule type" value="Genomic_DNA"/>
</dbReference>
<dbReference type="RefSeq" id="XP_001664017.1">
    <property type="nucleotide sequence ID" value="XM_001663967.1"/>
</dbReference>
<dbReference type="SMR" id="Q16I17"/>
<dbReference type="FunCoup" id="Q16I17">
    <property type="interactions" value="1556"/>
</dbReference>
<dbReference type="STRING" id="7159.Q16I17"/>
<dbReference type="PaxDb" id="7159-AAEL013828-PA"/>
<dbReference type="GeneID" id="5578712"/>
<dbReference type="KEGG" id="aag:5578712"/>
<dbReference type="VEuPathDB" id="VectorBase:AAEL013828"/>
<dbReference type="eggNOG" id="KOG1468">
    <property type="taxonomic scope" value="Eukaryota"/>
</dbReference>
<dbReference type="HOGENOM" id="CLU_016218_1_3_1"/>
<dbReference type="InParanoid" id="Q16I17"/>
<dbReference type="OMA" id="CETRPLN"/>
<dbReference type="OrthoDB" id="2461at2759"/>
<dbReference type="PhylomeDB" id="Q16I17"/>
<dbReference type="UniPathway" id="UPA00904">
    <property type="reaction ID" value="UER00874"/>
</dbReference>
<dbReference type="Proteomes" id="UP000008820">
    <property type="component" value="Unassembled WGS sequence"/>
</dbReference>
<dbReference type="Proteomes" id="UP000682892">
    <property type="component" value="Unassembled WGS sequence"/>
</dbReference>
<dbReference type="GO" id="GO:0005737">
    <property type="term" value="C:cytoplasm"/>
    <property type="evidence" value="ECO:0007669"/>
    <property type="project" value="UniProtKB-SubCell"/>
</dbReference>
<dbReference type="GO" id="GO:0005634">
    <property type="term" value="C:nucleus"/>
    <property type="evidence" value="ECO:0007669"/>
    <property type="project" value="UniProtKB-SubCell"/>
</dbReference>
<dbReference type="GO" id="GO:0046523">
    <property type="term" value="F:S-methyl-5-thioribose-1-phosphate isomerase activity"/>
    <property type="evidence" value="ECO:0007669"/>
    <property type="project" value="UniProtKB-UniRule"/>
</dbReference>
<dbReference type="GO" id="GO:0019509">
    <property type="term" value="P:L-methionine salvage from methylthioadenosine"/>
    <property type="evidence" value="ECO:0007669"/>
    <property type="project" value="UniProtKB-UniRule"/>
</dbReference>
<dbReference type="FunFam" id="1.20.120.420:FF:000010">
    <property type="entry name" value="Methylthioribose-1-phosphate isomerase"/>
    <property type="match status" value="1"/>
</dbReference>
<dbReference type="FunFam" id="3.40.50.10470:FF:000003">
    <property type="entry name" value="Methylthioribose-1-phosphate isomerase"/>
    <property type="match status" value="1"/>
</dbReference>
<dbReference type="Gene3D" id="1.20.120.420">
    <property type="entry name" value="translation initiation factor eif-2b, domain 1"/>
    <property type="match status" value="1"/>
</dbReference>
<dbReference type="Gene3D" id="3.40.50.10470">
    <property type="entry name" value="Translation initiation factor eif-2b, domain 2"/>
    <property type="match status" value="1"/>
</dbReference>
<dbReference type="HAMAP" id="MF_01678">
    <property type="entry name" value="Salvage_MtnA"/>
    <property type="match status" value="1"/>
</dbReference>
<dbReference type="InterPro" id="IPR000649">
    <property type="entry name" value="IF-2B-related"/>
</dbReference>
<dbReference type="InterPro" id="IPR005251">
    <property type="entry name" value="IF-M1Pi"/>
</dbReference>
<dbReference type="InterPro" id="IPR042529">
    <property type="entry name" value="IF_2B-like_C"/>
</dbReference>
<dbReference type="InterPro" id="IPR011559">
    <property type="entry name" value="Initiation_fac_2B_a/b/d"/>
</dbReference>
<dbReference type="InterPro" id="IPR027363">
    <property type="entry name" value="M1Pi_N"/>
</dbReference>
<dbReference type="InterPro" id="IPR037171">
    <property type="entry name" value="NagB/RpiA_transferase-like"/>
</dbReference>
<dbReference type="NCBIfam" id="TIGR00524">
    <property type="entry name" value="eIF-2B_rel"/>
    <property type="match status" value="1"/>
</dbReference>
<dbReference type="NCBIfam" id="NF004326">
    <property type="entry name" value="PRK05720.1"/>
    <property type="match status" value="1"/>
</dbReference>
<dbReference type="NCBIfam" id="TIGR00512">
    <property type="entry name" value="salvage_mtnA"/>
    <property type="match status" value="1"/>
</dbReference>
<dbReference type="PANTHER" id="PTHR43475">
    <property type="entry name" value="METHYLTHIORIBOSE-1-PHOSPHATE ISOMERASE"/>
    <property type="match status" value="1"/>
</dbReference>
<dbReference type="PANTHER" id="PTHR43475:SF1">
    <property type="entry name" value="METHYLTHIORIBOSE-1-PHOSPHATE ISOMERASE"/>
    <property type="match status" value="1"/>
</dbReference>
<dbReference type="Pfam" id="PF01008">
    <property type="entry name" value="IF-2B"/>
    <property type="match status" value="1"/>
</dbReference>
<dbReference type="SUPFAM" id="SSF100950">
    <property type="entry name" value="NagB/RpiA/CoA transferase-like"/>
    <property type="match status" value="1"/>
</dbReference>
<keyword id="KW-0028">Amino-acid biosynthesis</keyword>
<keyword id="KW-0963">Cytoplasm</keyword>
<keyword id="KW-0413">Isomerase</keyword>
<keyword id="KW-0486">Methionine biosynthesis</keyword>
<keyword id="KW-0539">Nucleus</keyword>
<keyword id="KW-1185">Reference proteome</keyword>
<evidence type="ECO:0000255" key="1">
    <source>
        <dbReference type="HAMAP-Rule" id="MF_03119"/>
    </source>
</evidence>
<proteinExistence type="inferred from homology"/>
<reference key="1">
    <citation type="journal article" date="2007" name="Science">
        <title>Genome sequence of Aedes aegypti, a major arbovirus vector.</title>
        <authorList>
            <person name="Nene V."/>
            <person name="Wortman J.R."/>
            <person name="Lawson D."/>
            <person name="Haas B.J."/>
            <person name="Kodira C.D."/>
            <person name="Tu Z.J."/>
            <person name="Loftus B.J."/>
            <person name="Xi Z."/>
            <person name="Megy K."/>
            <person name="Grabherr M."/>
            <person name="Ren Q."/>
            <person name="Zdobnov E.M."/>
            <person name="Lobo N.F."/>
            <person name="Campbell K.S."/>
            <person name="Brown S.E."/>
            <person name="Bonaldo M.F."/>
            <person name="Zhu J."/>
            <person name="Sinkins S.P."/>
            <person name="Hogenkamp D.G."/>
            <person name="Amedeo P."/>
            <person name="Arensburger P."/>
            <person name="Atkinson P.W."/>
            <person name="Bidwell S.L."/>
            <person name="Biedler J."/>
            <person name="Birney E."/>
            <person name="Bruggner R.V."/>
            <person name="Costas J."/>
            <person name="Coy M.R."/>
            <person name="Crabtree J."/>
            <person name="Crawford M."/>
            <person name="DeBruyn B."/>
            <person name="DeCaprio D."/>
            <person name="Eiglmeier K."/>
            <person name="Eisenstadt E."/>
            <person name="El-Dorry H."/>
            <person name="Gelbart W.M."/>
            <person name="Gomes S.L."/>
            <person name="Hammond M."/>
            <person name="Hannick L.I."/>
            <person name="Hogan J.R."/>
            <person name="Holmes M.H."/>
            <person name="Jaffe D."/>
            <person name="Johnston S.J."/>
            <person name="Kennedy R.C."/>
            <person name="Koo H."/>
            <person name="Kravitz S."/>
            <person name="Kriventseva E.V."/>
            <person name="Kulp D."/>
            <person name="Labutti K."/>
            <person name="Lee E."/>
            <person name="Li S."/>
            <person name="Lovin D.D."/>
            <person name="Mao C."/>
            <person name="Mauceli E."/>
            <person name="Menck C.F."/>
            <person name="Miller J.R."/>
            <person name="Montgomery P."/>
            <person name="Mori A."/>
            <person name="Nascimento A.L."/>
            <person name="Naveira H.F."/>
            <person name="Nusbaum C."/>
            <person name="O'Leary S.B."/>
            <person name="Orvis J."/>
            <person name="Pertea M."/>
            <person name="Quesneville H."/>
            <person name="Reidenbach K.R."/>
            <person name="Rogers Y.-H.C."/>
            <person name="Roth C.W."/>
            <person name="Schneider J.R."/>
            <person name="Schatz M."/>
            <person name="Shumway M."/>
            <person name="Stanke M."/>
            <person name="Stinson E.O."/>
            <person name="Tubio J.M.C."/>
            <person name="Vanzee J.P."/>
            <person name="Verjovski-Almeida S."/>
            <person name="Werner D."/>
            <person name="White O.R."/>
            <person name="Wyder S."/>
            <person name="Zeng Q."/>
            <person name="Zhao Q."/>
            <person name="Zhao Y."/>
            <person name="Hill C.A."/>
            <person name="Raikhel A.S."/>
            <person name="Soares M.B."/>
            <person name="Knudson D.L."/>
            <person name="Lee N.H."/>
            <person name="Galagan J."/>
            <person name="Salzberg S.L."/>
            <person name="Paulsen I.T."/>
            <person name="Dimopoulos G."/>
            <person name="Collins F.H."/>
            <person name="Bruce B."/>
            <person name="Fraser-Liggett C.M."/>
            <person name="Severson D.W."/>
        </authorList>
    </citation>
    <scope>NUCLEOTIDE SEQUENCE [LARGE SCALE GENOMIC DNA]</scope>
    <source>
        <strain>LVPib12</strain>
    </source>
</reference>
<organism>
    <name type="scientific">Aedes aegypti</name>
    <name type="common">Yellowfever mosquito</name>
    <name type="synonym">Culex aegypti</name>
    <dbReference type="NCBI Taxonomy" id="7159"/>
    <lineage>
        <taxon>Eukaryota</taxon>
        <taxon>Metazoa</taxon>
        <taxon>Ecdysozoa</taxon>
        <taxon>Arthropoda</taxon>
        <taxon>Hexapoda</taxon>
        <taxon>Insecta</taxon>
        <taxon>Pterygota</taxon>
        <taxon>Neoptera</taxon>
        <taxon>Endopterygota</taxon>
        <taxon>Diptera</taxon>
        <taxon>Nematocera</taxon>
        <taxon>Culicoidea</taxon>
        <taxon>Culicidae</taxon>
        <taxon>Culicinae</taxon>
        <taxon>Aedini</taxon>
        <taxon>Aedes</taxon>
        <taxon>Stegomyia</taxon>
    </lineage>
</organism>
<name>MTNA_AEDAE</name>